<name>CH601_AZOSB</name>
<proteinExistence type="inferred from homology"/>
<comment type="function">
    <text evidence="1">Together with its co-chaperonin GroES, plays an essential role in assisting protein folding. The GroEL-GroES system forms a nano-cage that allows encapsulation of the non-native substrate proteins and provides a physical environment optimized to promote and accelerate protein folding.</text>
</comment>
<comment type="catalytic activity">
    <reaction evidence="1">
        <text>ATP + H2O + a folded polypeptide = ADP + phosphate + an unfolded polypeptide.</text>
        <dbReference type="EC" id="5.6.1.7"/>
    </reaction>
</comment>
<comment type="subunit">
    <text evidence="1">Forms a cylinder of 14 subunits composed of two heptameric rings stacked back-to-back. Interacts with the co-chaperonin GroES.</text>
</comment>
<comment type="subcellular location">
    <subcellularLocation>
        <location evidence="1">Cytoplasm</location>
    </subcellularLocation>
</comment>
<comment type="similarity">
    <text evidence="1">Belongs to the chaperonin (HSP60) family.</text>
</comment>
<sequence>MAAKEVKFGDSARERMVAGVNVLANAVKVTLGPKGRNVVLERSFGAPTVTKDGVSVAKEIELKDKFENMGAQMVKEVASKTSDIAGDGTTTATVLAQSIVREGMKFVAAGMNPMDLKRGIDKAVVATIEELKKLSKPCSTNKEIAQVGSISANSDADIGGIIAQAMEKVGKEGVITVEDGKSLNNELDVVEGMQFDRGYLSPYFINNPDKQVAILENPFVLLFDKKISNIRDLLPVLEQVAKAGRPLLIIAEDVDGEALATLVVNNIRGILKTCAVKAPGFGDRRKAMLEDIAILTGGQVIAEEVGLTLEKATLQDLGQAKRIEIGKENTIIIDGAGEASRIEARVKQIRVQIEEATSDYDREKLQERVAKLAGGVAVIKVGAATEVEMKEKKARVEDALHATRAAVEEGIVPGGGVALLRARASLAGLKGDNHDQDAGIKIVLRAMEQPLREIVANAGDEASVVVNKVVEGSGNFGYNAATGEYGDMVEMGVLDPTKVTRTALQNAASVASLMLTTDCMVGELAEDKPAGGMPGMGGMGGMGGMDMGM</sequence>
<organism>
    <name type="scientific">Azoarcus sp. (strain BH72)</name>
    <dbReference type="NCBI Taxonomy" id="418699"/>
    <lineage>
        <taxon>Bacteria</taxon>
        <taxon>Pseudomonadati</taxon>
        <taxon>Pseudomonadota</taxon>
        <taxon>Betaproteobacteria</taxon>
        <taxon>Rhodocyclales</taxon>
        <taxon>Zoogloeaceae</taxon>
        <taxon>Azoarcus</taxon>
    </lineage>
</organism>
<keyword id="KW-0067">ATP-binding</keyword>
<keyword id="KW-0143">Chaperone</keyword>
<keyword id="KW-0963">Cytoplasm</keyword>
<keyword id="KW-0413">Isomerase</keyword>
<keyword id="KW-0547">Nucleotide-binding</keyword>
<keyword id="KW-1185">Reference proteome</keyword>
<gene>
    <name evidence="1" type="primary">groEL1</name>
    <name evidence="1" type="synonym">groL1</name>
    <name type="ordered locus">azo0974</name>
</gene>
<dbReference type="EC" id="5.6.1.7" evidence="1"/>
<dbReference type="EMBL" id="AM406670">
    <property type="protein sequence ID" value="CAL93591.1"/>
    <property type="molecule type" value="Genomic_DNA"/>
</dbReference>
<dbReference type="RefSeq" id="WP_011764708.1">
    <property type="nucleotide sequence ID" value="NC_008702.1"/>
</dbReference>
<dbReference type="SMR" id="A1K436"/>
<dbReference type="STRING" id="62928.azo0974"/>
<dbReference type="KEGG" id="aoa:dqs_1048"/>
<dbReference type="KEGG" id="azo:azo0974"/>
<dbReference type="eggNOG" id="COG0459">
    <property type="taxonomic scope" value="Bacteria"/>
</dbReference>
<dbReference type="HOGENOM" id="CLU_016503_3_0_4"/>
<dbReference type="OrthoDB" id="9766614at2"/>
<dbReference type="Proteomes" id="UP000002588">
    <property type="component" value="Chromosome"/>
</dbReference>
<dbReference type="GO" id="GO:0005737">
    <property type="term" value="C:cytoplasm"/>
    <property type="evidence" value="ECO:0007669"/>
    <property type="project" value="UniProtKB-SubCell"/>
</dbReference>
<dbReference type="GO" id="GO:0005524">
    <property type="term" value="F:ATP binding"/>
    <property type="evidence" value="ECO:0007669"/>
    <property type="project" value="UniProtKB-UniRule"/>
</dbReference>
<dbReference type="GO" id="GO:0140662">
    <property type="term" value="F:ATP-dependent protein folding chaperone"/>
    <property type="evidence" value="ECO:0007669"/>
    <property type="project" value="InterPro"/>
</dbReference>
<dbReference type="GO" id="GO:0016853">
    <property type="term" value="F:isomerase activity"/>
    <property type="evidence" value="ECO:0007669"/>
    <property type="project" value="UniProtKB-KW"/>
</dbReference>
<dbReference type="GO" id="GO:0051082">
    <property type="term" value="F:unfolded protein binding"/>
    <property type="evidence" value="ECO:0007669"/>
    <property type="project" value="UniProtKB-UniRule"/>
</dbReference>
<dbReference type="GO" id="GO:0042026">
    <property type="term" value="P:protein refolding"/>
    <property type="evidence" value="ECO:0007669"/>
    <property type="project" value="UniProtKB-UniRule"/>
</dbReference>
<dbReference type="CDD" id="cd03344">
    <property type="entry name" value="GroEL"/>
    <property type="match status" value="1"/>
</dbReference>
<dbReference type="FunFam" id="1.10.560.10:FF:000001">
    <property type="entry name" value="60 kDa chaperonin"/>
    <property type="match status" value="1"/>
</dbReference>
<dbReference type="FunFam" id="3.50.7.10:FF:000001">
    <property type="entry name" value="60 kDa chaperonin"/>
    <property type="match status" value="1"/>
</dbReference>
<dbReference type="Gene3D" id="3.50.7.10">
    <property type="entry name" value="GroEL"/>
    <property type="match status" value="1"/>
</dbReference>
<dbReference type="Gene3D" id="1.10.560.10">
    <property type="entry name" value="GroEL-like equatorial domain"/>
    <property type="match status" value="1"/>
</dbReference>
<dbReference type="Gene3D" id="3.30.260.10">
    <property type="entry name" value="TCP-1-like chaperonin intermediate domain"/>
    <property type="match status" value="1"/>
</dbReference>
<dbReference type="HAMAP" id="MF_00600">
    <property type="entry name" value="CH60"/>
    <property type="match status" value="1"/>
</dbReference>
<dbReference type="InterPro" id="IPR018370">
    <property type="entry name" value="Chaperonin_Cpn60_CS"/>
</dbReference>
<dbReference type="InterPro" id="IPR001844">
    <property type="entry name" value="Cpn60/GroEL"/>
</dbReference>
<dbReference type="InterPro" id="IPR002423">
    <property type="entry name" value="Cpn60/GroEL/TCP-1"/>
</dbReference>
<dbReference type="InterPro" id="IPR027409">
    <property type="entry name" value="GroEL-like_apical_dom_sf"/>
</dbReference>
<dbReference type="InterPro" id="IPR027413">
    <property type="entry name" value="GROEL-like_equatorial_sf"/>
</dbReference>
<dbReference type="InterPro" id="IPR027410">
    <property type="entry name" value="TCP-1-like_intermed_sf"/>
</dbReference>
<dbReference type="NCBIfam" id="TIGR02348">
    <property type="entry name" value="GroEL"/>
    <property type="match status" value="1"/>
</dbReference>
<dbReference type="NCBIfam" id="NF000592">
    <property type="entry name" value="PRK00013.1"/>
    <property type="match status" value="1"/>
</dbReference>
<dbReference type="NCBIfam" id="NF009487">
    <property type="entry name" value="PRK12849.1"/>
    <property type="match status" value="1"/>
</dbReference>
<dbReference type="NCBIfam" id="NF009488">
    <property type="entry name" value="PRK12850.1"/>
    <property type="match status" value="1"/>
</dbReference>
<dbReference type="NCBIfam" id="NF009489">
    <property type="entry name" value="PRK12851.1"/>
    <property type="match status" value="1"/>
</dbReference>
<dbReference type="PANTHER" id="PTHR45633">
    <property type="entry name" value="60 KDA HEAT SHOCK PROTEIN, MITOCHONDRIAL"/>
    <property type="match status" value="1"/>
</dbReference>
<dbReference type="Pfam" id="PF00118">
    <property type="entry name" value="Cpn60_TCP1"/>
    <property type="match status" value="1"/>
</dbReference>
<dbReference type="PRINTS" id="PR00298">
    <property type="entry name" value="CHAPERONIN60"/>
</dbReference>
<dbReference type="SUPFAM" id="SSF52029">
    <property type="entry name" value="GroEL apical domain-like"/>
    <property type="match status" value="1"/>
</dbReference>
<dbReference type="SUPFAM" id="SSF48592">
    <property type="entry name" value="GroEL equatorial domain-like"/>
    <property type="match status" value="1"/>
</dbReference>
<dbReference type="SUPFAM" id="SSF54849">
    <property type="entry name" value="GroEL-intermediate domain like"/>
    <property type="match status" value="1"/>
</dbReference>
<dbReference type="PROSITE" id="PS00296">
    <property type="entry name" value="CHAPERONINS_CPN60"/>
    <property type="match status" value="1"/>
</dbReference>
<protein>
    <recommendedName>
        <fullName evidence="1">Chaperonin GroEL 1</fullName>
        <ecNumber evidence="1">5.6.1.7</ecNumber>
    </recommendedName>
    <alternativeName>
        <fullName evidence="1">60 kDa chaperonin 1</fullName>
    </alternativeName>
    <alternativeName>
        <fullName evidence="1">Chaperonin-60 1</fullName>
        <shortName evidence="1">Cpn60 1</shortName>
    </alternativeName>
</protein>
<accession>A1K436</accession>
<reference key="1">
    <citation type="journal article" date="2006" name="Nat. Biotechnol.">
        <title>Complete genome of the mutualistic, N2-fixing grass endophyte Azoarcus sp. strain BH72.</title>
        <authorList>
            <person name="Krause A."/>
            <person name="Ramakumar A."/>
            <person name="Bartels D."/>
            <person name="Battistoni F."/>
            <person name="Bekel T."/>
            <person name="Boch J."/>
            <person name="Boehm M."/>
            <person name="Friedrich F."/>
            <person name="Hurek T."/>
            <person name="Krause L."/>
            <person name="Linke B."/>
            <person name="McHardy A.C."/>
            <person name="Sarkar A."/>
            <person name="Schneiker S."/>
            <person name="Syed A.A."/>
            <person name="Thauer R."/>
            <person name="Vorhoelter F.-J."/>
            <person name="Weidner S."/>
            <person name="Puehler A."/>
            <person name="Reinhold-Hurek B."/>
            <person name="Kaiser O."/>
            <person name="Goesmann A."/>
        </authorList>
    </citation>
    <scope>NUCLEOTIDE SEQUENCE [LARGE SCALE GENOMIC DNA]</scope>
    <source>
        <strain>BH72</strain>
    </source>
</reference>
<feature type="chain" id="PRO_0000331970" description="Chaperonin GroEL 1">
    <location>
        <begin position="1"/>
        <end position="549"/>
    </location>
</feature>
<feature type="binding site" evidence="1">
    <location>
        <begin position="30"/>
        <end position="33"/>
    </location>
    <ligand>
        <name>ATP</name>
        <dbReference type="ChEBI" id="CHEBI:30616"/>
    </ligand>
</feature>
<feature type="binding site" evidence="1">
    <location>
        <position position="51"/>
    </location>
    <ligand>
        <name>ATP</name>
        <dbReference type="ChEBI" id="CHEBI:30616"/>
    </ligand>
</feature>
<feature type="binding site" evidence="1">
    <location>
        <begin position="87"/>
        <end position="91"/>
    </location>
    <ligand>
        <name>ATP</name>
        <dbReference type="ChEBI" id="CHEBI:30616"/>
    </ligand>
</feature>
<feature type="binding site" evidence="1">
    <location>
        <position position="415"/>
    </location>
    <ligand>
        <name>ATP</name>
        <dbReference type="ChEBI" id="CHEBI:30616"/>
    </ligand>
</feature>
<feature type="binding site" evidence="1">
    <location>
        <begin position="479"/>
        <end position="481"/>
    </location>
    <ligand>
        <name>ATP</name>
        <dbReference type="ChEBI" id="CHEBI:30616"/>
    </ligand>
</feature>
<feature type="binding site" evidence="1">
    <location>
        <position position="495"/>
    </location>
    <ligand>
        <name>ATP</name>
        <dbReference type="ChEBI" id="CHEBI:30616"/>
    </ligand>
</feature>
<evidence type="ECO:0000255" key="1">
    <source>
        <dbReference type="HAMAP-Rule" id="MF_00600"/>
    </source>
</evidence>